<organism>
    <name type="scientific">Escherichia coli (strain K12)</name>
    <dbReference type="NCBI Taxonomy" id="83333"/>
    <lineage>
        <taxon>Bacteria</taxon>
        <taxon>Pseudomonadati</taxon>
        <taxon>Pseudomonadota</taxon>
        <taxon>Gammaproteobacteria</taxon>
        <taxon>Enterobacterales</taxon>
        <taxon>Enterobacteriaceae</taxon>
        <taxon>Escherichia</taxon>
    </lineage>
</organism>
<keyword id="KW-0997">Cell inner membrane</keyword>
<keyword id="KW-1003">Cell membrane</keyword>
<keyword id="KW-0472">Membrane</keyword>
<keyword id="KW-1185">Reference proteome</keyword>
<keyword id="KW-0812">Transmembrane</keyword>
<keyword id="KW-1133">Transmembrane helix</keyword>
<keyword id="KW-0813">Transport</keyword>
<evidence type="ECO:0000255" key="1"/>
<evidence type="ECO:0000305" key="2"/>
<gene>
    <name type="primary">ydiM</name>
    <name type="ordered locus">b1690</name>
    <name type="ordered locus">JW1680</name>
</gene>
<dbReference type="EMBL" id="U00096">
    <property type="protein sequence ID" value="AAC74760.1"/>
    <property type="molecule type" value="Genomic_DNA"/>
</dbReference>
<dbReference type="EMBL" id="AP009048">
    <property type="protein sequence ID" value="BAE76503.1"/>
    <property type="molecule type" value="Genomic_DNA"/>
</dbReference>
<dbReference type="PIR" id="B64927">
    <property type="entry name" value="B64927"/>
</dbReference>
<dbReference type="RefSeq" id="NP_416205.1">
    <property type="nucleotide sequence ID" value="NC_000913.3"/>
</dbReference>
<dbReference type="RefSeq" id="WP_000795537.1">
    <property type="nucleotide sequence ID" value="NZ_SSZK01000001.1"/>
</dbReference>
<dbReference type="SMR" id="P76197"/>
<dbReference type="BioGRID" id="4259455">
    <property type="interactions" value="125"/>
</dbReference>
<dbReference type="DIP" id="DIP-11754N"/>
<dbReference type="FunCoup" id="P76197">
    <property type="interactions" value="18"/>
</dbReference>
<dbReference type="IntAct" id="P76197">
    <property type="interactions" value="1"/>
</dbReference>
<dbReference type="STRING" id="511145.b1690"/>
<dbReference type="TCDB" id="2.A.1.15.12">
    <property type="family name" value="the major facilitator superfamily (mfs)"/>
</dbReference>
<dbReference type="PaxDb" id="511145-b1690"/>
<dbReference type="EnsemblBacteria" id="AAC74760">
    <property type="protein sequence ID" value="AAC74760"/>
    <property type="gene ID" value="b1690"/>
</dbReference>
<dbReference type="GeneID" id="946196"/>
<dbReference type="KEGG" id="ecj:JW1680"/>
<dbReference type="KEGG" id="eco:b1690"/>
<dbReference type="KEGG" id="ecoc:C3026_09680"/>
<dbReference type="PATRIC" id="fig|1411691.4.peg.568"/>
<dbReference type="EchoBASE" id="EB3729"/>
<dbReference type="eggNOG" id="COG0738">
    <property type="taxonomic scope" value="Bacteria"/>
</dbReference>
<dbReference type="HOGENOM" id="CLU_045105_0_1_6"/>
<dbReference type="InParanoid" id="P76197"/>
<dbReference type="OMA" id="MIHFTQW"/>
<dbReference type="OrthoDB" id="5858672at2"/>
<dbReference type="PhylomeDB" id="P76197"/>
<dbReference type="BioCyc" id="EcoCyc:B1690-MONOMER"/>
<dbReference type="PRO" id="PR:P76197"/>
<dbReference type="Proteomes" id="UP000000625">
    <property type="component" value="Chromosome"/>
</dbReference>
<dbReference type="GO" id="GO:0016020">
    <property type="term" value="C:membrane"/>
    <property type="evidence" value="ECO:0000318"/>
    <property type="project" value="GO_Central"/>
</dbReference>
<dbReference type="GO" id="GO:0005886">
    <property type="term" value="C:plasma membrane"/>
    <property type="evidence" value="ECO:0000314"/>
    <property type="project" value="EcoCyc"/>
</dbReference>
<dbReference type="GO" id="GO:0022857">
    <property type="term" value="F:transmembrane transporter activity"/>
    <property type="evidence" value="ECO:0007669"/>
    <property type="project" value="InterPro"/>
</dbReference>
<dbReference type="CDD" id="cd17396">
    <property type="entry name" value="MFS_YdiM_like"/>
    <property type="match status" value="1"/>
</dbReference>
<dbReference type="FunFam" id="1.20.1250.20:FF:000292">
    <property type="entry name" value="Inner membrane transporter YdiM"/>
    <property type="match status" value="1"/>
</dbReference>
<dbReference type="FunFam" id="1.20.1250.20:FF:000135">
    <property type="entry name" value="MFS family transporter"/>
    <property type="match status" value="1"/>
</dbReference>
<dbReference type="Gene3D" id="1.20.1250.20">
    <property type="entry name" value="MFS general substrate transporter like domains"/>
    <property type="match status" value="2"/>
</dbReference>
<dbReference type="InterPro" id="IPR011701">
    <property type="entry name" value="MFS"/>
</dbReference>
<dbReference type="InterPro" id="IPR020846">
    <property type="entry name" value="MFS_dom"/>
</dbReference>
<dbReference type="InterPro" id="IPR036259">
    <property type="entry name" value="MFS_trans_sf"/>
</dbReference>
<dbReference type="InterPro" id="IPR051788">
    <property type="entry name" value="MFS_Transporter"/>
</dbReference>
<dbReference type="InterPro" id="IPR005829">
    <property type="entry name" value="Sugar_transporter_CS"/>
</dbReference>
<dbReference type="PANTHER" id="PTHR23514">
    <property type="entry name" value="BYPASS OF STOP CODON PROTEIN 6"/>
    <property type="match status" value="1"/>
</dbReference>
<dbReference type="PANTHER" id="PTHR23514:SF3">
    <property type="entry name" value="BYPASS OF STOP CODON PROTEIN 6"/>
    <property type="match status" value="1"/>
</dbReference>
<dbReference type="Pfam" id="PF07690">
    <property type="entry name" value="MFS_1"/>
    <property type="match status" value="1"/>
</dbReference>
<dbReference type="SUPFAM" id="SSF103473">
    <property type="entry name" value="MFS general substrate transporter"/>
    <property type="match status" value="1"/>
</dbReference>
<dbReference type="PROSITE" id="PS50850">
    <property type="entry name" value="MFS"/>
    <property type="match status" value="1"/>
</dbReference>
<dbReference type="PROSITE" id="PS00216">
    <property type="entry name" value="SUGAR_TRANSPORT_1"/>
    <property type="match status" value="1"/>
</dbReference>
<comment type="subcellular location">
    <subcellularLocation>
        <location>Cell inner membrane</location>
        <topology>Multi-pass membrane protein</topology>
    </subcellularLocation>
</comment>
<comment type="similarity">
    <text evidence="2">Belongs to the major facilitator superfamily.</text>
</comment>
<feature type="chain" id="PRO_0000173404" description="Inner membrane transport protein YdiM">
    <location>
        <begin position="1"/>
        <end position="404"/>
    </location>
</feature>
<feature type="topological domain" description="Periplasmic" evidence="1">
    <location>
        <begin position="1"/>
        <end position="5"/>
    </location>
</feature>
<feature type="transmembrane region" description="Helical" evidence="1">
    <location>
        <begin position="6"/>
        <end position="26"/>
    </location>
</feature>
<feature type="topological domain" description="Cytoplasmic" evidence="1">
    <location>
        <begin position="27"/>
        <end position="43"/>
    </location>
</feature>
<feature type="transmembrane region" description="Helical" evidence="1">
    <location>
        <begin position="44"/>
        <end position="64"/>
    </location>
</feature>
<feature type="topological domain" description="Periplasmic" evidence="1">
    <location>
        <begin position="65"/>
        <end position="84"/>
    </location>
</feature>
<feature type="transmembrane region" description="Helical" evidence="1">
    <location>
        <begin position="85"/>
        <end position="105"/>
    </location>
</feature>
<feature type="topological domain" description="Cytoplasmic" evidence="1">
    <location>
        <begin position="106"/>
        <end position="132"/>
    </location>
</feature>
<feature type="transmembrane region" description="Helical" evidence="1">
    <location>
        <begin position="133"/>
        <end position="153"/>
    </location>
</feature>
<feature type="topological domain" description="Periplasmic" evidence="1">
    <location>
        <begin position="154"/>
        <end position="157"/>
    </location>
</feature>
<feature type="transmembrane region" description="Helical" evidence="1">
    <location>
        <begin position="158"/>
        <end position="178"/>
    </location>
</feature>
<feature type="topological domain" description="Cytoplasmic" evidence="1">
    <location>
        <begin position="179"/>
        <end position="206"/>
    </location>
</feature>
<feature type="transmembrane region" description="Helical" evidence="1">
    <location>
        <begin position="207"/>
        <end position="227"/>
    </location>
</feature>
<feature type="topological domain" description="Periplasmic" evidence="1">
    <location>
        <begin position="228"/>
        <end position="246"/>
    </location>
</feature>
<feature type="transmembrane region" description="Helical" evidence="1">
    <location>
        <begin position="247"/>
        <end position="267"/>
    </location>
</feature>
<feature type="topological domain" description="Cytoplasmic" evidence="1">
    <location>
        <begin position="268"/>
        <end position="273"/>
    </location>
</feature>
<feature type="transmembrane region" description="Helical" evidence="1">
    <location>
        <begin position="274"/>
        <end position="294"/>
    </location>
</feature>
<feature type="topological domain" description="Periplasmic" evidence="1">
    <location>
        <begin position="295"/>
        <end position="296"/>
    </location>
</feature>
<feature type="transmembrane region" description="Helical" evidence="1">
    <location>
        <begin position="297"/>
        <end position="317"/>
    </location>
</feature>
<feature type="topological domain" description="Cytoplasmic" evidence="1">
    <location>
        <begin position="318"/>
        <end position="336"/>
    </location>
</feature>
<feature type="transmembrane region" description="Helical" evidence="1">
    <location>
        <begin position="337"/>
        <end position="357"/>
    </location>
</feature>
<feature type="topological domain" description="Periplasmic" evidence="1">
    <location>
        <begin position="358"/>
        <end position="364"/>
    </location>
</feature>
<feature type="transmembrane region" description="Helical" evidence="1">
    <location>
        <begin position="365"/>
        <end position="385"/>
    </location>
</feature>
<feature type="topological domain" description="Cytoplasmic" evidence="1">
    <location>
        <begin position="386"/>
        <end position="404"/>
    </location>
</feature>
<proteinExistence type="evidence at protein level"/>
<accession>P76197</accession>
<accession>Q2MB53</accession>
<name>YDIM_ECOLI</name>
<protein>
    <recommendedName>
        <fullName>Inner membrane transport protein YdiM</fullName>
    </recommendedName>
</protein>
<sequence>MKNPYFPTALGLYFNYLVHGMGVLLMSLNMASLETLWQTNAAGVSIVISSLGIGRLSVLLFAGLLSDRFGRRPFIMLGMCCYMAFFFGILQTNNIIIAYVFGFLAGMANSFLDAGTYPSLMEAFPRSPGTANILIKAFVSSGQFLLPLIISLLVWAELWFGWSFMIAAGIMFINALFLYRCTFPPHPGRRLPVIKKTTSSTEHRCSIIDLASYTLYGYISMATFYLVSQWLAQYGQFVAGMSYTMSIKLLSIYTVGSLLCVFITAPLIRNTVRPTTLLMLYTFISFIALFTVCLHPTFYVVIIFAFVIGFTSAGGVVQIGLTLMAERFPYAKGKATGIYYSAGSIATFTIPLITAHLSQRSIADIMWFDTAIAAIGFLLALFIGLRSRKKTRHHSLKENVAPGG</sequence>
<reference key="1">
    <citation type="journal article" date="1997" name="Science">
        <title>The complete genome sequence of Escherichia coli K-12.</title>
        <authorList>
            <person name="Blattner F.R."/>
            <person name="Plunkett G. III"/>
            <person name="Bloch C.A."/>
            <person name="Perna N.T."/>
            <person name="Burland V."/>
            <person name="Riley M."/>
            <person name="Collado-Vides J."/>
            <person name="Glasner J.D."/>
            <person name="Rode C.K."/>
            <person name="Mayhew G.F."/>
            <person name="Gregor J."/>
            <person name="Davis N.W."/>
            <person name="Kirkpatrick H.A."/>
            <person name="Goeden M.A."/>
            <person name="Rose D.J."/>
            <person name="Mau B."/>
            <person name="Shao Y."/>
        </authorList>
    </citation>
    <scope>NUCLEOTIDE SEQUENCE [LARGE SCALE GENOMIC DNA]</scope>
    <source>
        <strain>K12 / MG1655 / ATCC 47076</strain>
    </source>
</reference>
<reference key="2">
    <citation type="journal article" date="2006" name="Mol. Syst. Biol.">
        <title>Highly accurate genome sequences of Escherichia coli K-12 strains MG1655 and W3110.</title>
        <authorList>
            <person name="Hayashi K."/>
            <person name="Morooka N."/>
            <person name="Yamamoto Y."/>
            <person name="Fujita K."/>
            <person name="Isono K."/>
            <person name="Choi S."/>
            <person name="Ohtsubo E."/>
            <person name="Baba T."/>
            <person name="Wanner B.L."/>
            <person name="Mori H."/>
            <person name="Horiuchi T."/>
        </authorList>
    </citation>
    <scope>NUCLEOTIDE SEQUENCE [LARGE SCALE GENOMIC DNA]</scope>
    <source>
        <strain>K12 / W3110 / ATCC 27325 / DSM 5911</strain>
    </source>
</reference>
<reference key="3">
    <citation type="journal article" date="2005" name="Science">
        <title>Global topology analysis of the Escherichia coli inner membrane proteome.</title>
        <authorList>
            <person name="Daley D.O."/>
            <person name="Rapp M."/>
            <person name="Granseth E."/>
            <person name="Melen K."/>
            <person name="Drew D."/>
            <person name="von Heijne G."/>
        </authorList>
    </citation>
    <scope>TOPOLOGY [LARGE SCALE ANALYSIS]</scope>
    <source>
        <strain>K12 / MG1655 / ATCC 47076</strain>
    </source>
</reference>